<feature type="chain" id="PRO_0000145777" description="Bifunctional F420 biosynthesis protein FbiB">
    <location>
        <begin position="1"/>
        <end position="448"/>
    </location>
</feature>
<feature type="region of interest" description="Coenzyme F420:L-glutamate ligase" evidence="1">
    <location>
        <begin position="1"/>
        <end position="244"/>
    </location>
</feature>
<feature type="region of interest" description="Dehydro-coenzyme F420-0 reductase" evidence="1">
    <location>
        <begin position="245"/>
        <end position="448"/>
    </location>
</feature>
<feature type="binding site" evidence="1">
    <location>
        <begin position="20"/>
        <end position="23"/>
    </location>
    <ligand>
        <name>GTP</name>
        <dbReference type="ChEBI" id="CHEBI:37565"/>
    </ligand>
</feature>
<feature type="binding site" evidence="1">
    <location>
        <position position="50"/>
    </location>
    <ligand>
        <name>GTP</name>
        <dbReference type="ChEBI" id="CHEBI:37565"/>
    </ligand>
</feature>
<feature type="binding site" evidence="1">
    <location>
        <position position="55"/>
    </location>
    <ligand>
        <name>GTP</name>
        <dbReference type="ChEBI" id="CHEBI:37565"/>
    </ligand>
</feature>
<feature type="binding site" evidence="1">
    <location>
        <position position="109"/>
    </location>
    <ligand>
        <name>a divalent metal cation</name>
        <dbReference type="ChEBI" id="CHEBI:60240"/>
        <label>1</label>
    </ligand>
</feature>
<feature type="binding site" evidence="1">
    <location>
        <position position="112"/>
    </location>
    <ligand>
        <name>GTP</name>
        <dbReference type="ChEBI" id="CHEBI:37565"/>
    </ligand>
</feature>
<feature type="binding site" evidence="1">
    <location>
        <position position="150"/>
    </location>
    <ligand>
        <name>a divalent metal cation</name>
        <dbReference type="ChEBI" id="CHEBI:60240"/>
        <label>1</label>
    </ligand>
</feature>
<feature type="binding site" evidence="1">
    <location>
        <position position="151"/>
    </location>
    <ligand>
        <name>a divalent metal cation</name>
        <dbReference type="ChEBI" id="CHEBI:60240"/>
        <label>2</label>
    </ligand>
</feature>
<feature type="binding site" evidence="1">
    <location>
        <begin position="260"/>
        <end position="264"/>
    </location>
    <ligand>
        <name>FMN</name>
        <dbReference type="ChEBI" id="CHEBI:58210"/>
    </ligand>
</feature>
<feature type="binding site" evidence="1">
    <location>
        <position position="288"/>
    </location>
    <ligand>
        <name>FMN</name>
        <dbReference type="ChEBI" id="CHEBI:58210"/>
    </ligand>
</feature>
<feature type="binding site" evidence="1">
    <location>
        <position position="320"/>
    </location>
    <ligand>
        <name>coenzyme F420-(gamma-Glu)n</name>
        <dbReference type="ChEBI" id="CHEBI:133980"/>
    </ligand>
</feature>
<feature type="binding site" evidence="1">
    <location>
        <position position="399"/>
    </location>
    <ligand>
        <name>FMN</name>
        <dbReference type="ChEBI" id="CHEBI:58210"/>
    </ligand>
</feature>
<feature type="binding site" evidence="1">
    <location>
        <position position="436"/>
    </location>
    <ligand>
        <name>FMN</name>
        <dbReference type="ChEBI" id="CHEBI:58210"/>
    </ligand>
</feature>
<organism>
    <name type="scientific">Mycobacterium bovis (strain ATCC BAA-935 / AF2122/97)</name>
    <dbReference type="NCBI Taxonomy" id="233413"/>
    <lineage>
        <taxon>Bacteria</taxon>
        <taxon>Bacillati</taxon>
        <taxon>Actinomycetota</taxon>
        <taxon>Actinomycetes</taxon>
        <taxon>Mycobacteriales</taxon>
        <taxon>Mycobacteriaceae</taxon>
        <taxon>Mycobacterium</taxon>
        <taxon>Mycobacterium tuberculosis complex</taxon>
    </lineage>
</organism>
<keyword id="KW-0342">GTP-binding</keyword>
<keyword id="KW-0436">Ligase</keyword>
<keyword id="KW-0460">Magnesium</keyword>
<keyword id="KW-0464">Manganese</keyword>
<keyword id="KW-0479">Metal-binding</keyword>
<keyword id="KW-0511">Multifunctional enzyme</keyword>
<keyword id="KW-0547">Nucleotide-binding</keyword>
<keyword id="KW-0560">Oxidoreductase</keyword>
<keyword id="KW-0630">Potassium</keyword>
<keyword id="KW-1185">Reference proteome</keyword>
<accession>Q7TWV3</accession>
<accession>A0A1R3Y3L5</accession>
<accession>X2BMN4</accession>
<protein>
    <recommendedName>
        <fullName evidence="1">Bifunctional F420 biosynthesis protein FbiB</fullName>
    </recommendedName>
    <domain>
        <recommendedName>
            <fullName evidence="1">Coenzyme F420:L-glutamate ligase</fullName>
            <ecNumber evidence="1">6.3.2.31</ecNumber>
            <ecNumber evidence="1">6.3.2.34</ecNumber>
        </recommendedName>
        <alternativeName>
            <fullName evidence="1">Coenzyme F420-0:L-glutamate ligase</fullName>
        </alternativeName>
        <alternativeName>
            <fullName evidence="1">Coenzyme F420-1:gamma-L-glutamate ligase</fullName>
        </alternativeName>
    </domain>
    <domain>
        <recommendedName>
            <fullName evidence="1">Dehydro-coenzyme F420-0 reductase</fullName>
            <ecNumber evidence="1">1.3.8.17</ecNumber>
        </recommendedName>
    </domain>
</protein>
<reference key="1">
    <citation type="journal article" date="2003" name="Proc. Natl. Acad. Sci. U.S.A.">
        <title>The complete genome sequence of Mycobacterium bovis.</title>
        <authorList>
            <person name="Garnier T."/>
            <person name="Eiglmeier K."/>
            <person name="Camus J.-C."/>
            <person name="Medina N."/>
            <person name="Mansoor H."/>
            <person name="Pryor M."/>
            <person name="Duthoy S."/>
            <person name="Grondin S."/>
            <person name="Lacroix C."/>
            <person name="Monsempe C."/>
            <person name="Simon S."/>
            <person name="Harris B."/>
            <person name="Atkin R."/>
            <person name="Doggett J."/>
            <person name="Mayes R."/>
            <person name="Keating L."/>
            <person name="Wheeler P.R."/>
            <person name="Parkhill J."/>
            <person name="Barrell B.G."/>
            <person name="Cole S.T."/>
            <person name="Gordon S.V."/>
            <person name="Hewinson R.G."/>
        </authorList>
    </citation>
    <scope>NUCLEOTIDE SEQUENCE [LARGE SCALE GENOMIC DNA]</scope>
    <source>
        <strain>ATCC BAA-935 / AF2122/97</strain>
    </source>
</reference>
<reference key="2">
    <citation type="journal article" date="2017" name="Genome Announc.">
        <title>Updated reference genome sequence and annotation of Mycobacterium bovis AF2122/97.</title>
        <authorList>
            <person name="Malone K.M."/>
            <person name="Farrell D."/>
            <person name="Stuber T.P."/>
            <person name="Schubert O.T."/>
            <person name="Aebersold R."/>
            <person name="Robbe-Austerman S."/>
            <person name="Gordon S.V."/>
        </authorList>
    </citation>
    <scope>NUCLEOTIDE SEQUENCE [LARGE SCALE GENOMIC DNA]</scope>
    <scope>GENOME REANNOTATION</scope>
    <source>
        <strain>ATCC BAA-935 / AF2122/97</strain>
    </source>
</reference>
<reference key="3">
    <citation type="journal article" date="2001" name="J. Bacteriol.">
        <title>Use of transposon Tn5367 mutagenesis and a nitroimidazopyran-based selection system to demonstrate a requirement for fbiA and fbiB in coenzyme F(420) biosynthesis by Mycobacterium bovis BCG.</title>
        <authorList>
            <person name="Choi K.-P."/>
            <person name="Bair T.B."/>
            <person name="Bae Y.-M."/>
            <person name="Daniels L."/>
        </authorList>
    </citation>
    <scope>ROLE IN COENZYME F420 BIOSYNTHESIS</scope>
    <scope>DISRUPTION PHENOTYPE</scope>
    <source>
        <strain>BCG</strain>
    </source>
</reference>
<name>FBIB_MYCBO</name>
<dbReference type="EC" id="6.3.2.31" evidence="1"/>
<dbReference type="EC" id="6.3.2.34" evidence="1"/>
<dbReference type="EC" id="1.3.8.17" evidence="1"/>
<dbReference type="EMBL" id="LT708304">
    <property type="protein sequence ID" value="SIU01919.1"/>
    <property type="molecule type" value="Genomic_DNA"/>
</dbReference>
<dbReference type="RefSeq" id="NP_856935.1">
    <property type="nucleotide sequence ID" value="NC_002945.3"/>
</dbReference>
<dbReference type="RefSeq" id="WP_003900663.1">
    <property type="nucleotide sequence ID" value="NC_002945.4"/>
</dbReference>
<dbReference type="SMR" id="Q7TWV3"/>
<dbReference type="KEGG" id="mbo:BQ2027_MB3290"/>
<dbReference type="PATRIC" id="fig|233413.5.peg.3617"/>
<dbReference type="BRENDA" id="1.3.8.17">
    <property type="organism ID" value="3494"/>
</dbReference>
<dbReference type="BRENDA" id="6.3.2.31">
    <property type="organism ID" value="3494"/>
</dbReference>
<dbReference type="BRENDA" id="6.3.2.34">
    <property type="organism ID" value="3494"/>
</dbReference>
<dbReference type="UniPathway" id="UPA00071"/>
<dbReference type="Proteomes" id="UP000001419">
    <property type="component" value="Chromosome"/>
</dbReference>
<dbReference type="GO" id="GO:0052618">
    <property type="term" value="F:coenzyme F420-0:L-glutamate ligase activity"/>
    <property type="evidence" value="ECO:0007669"/>
    <property type="project" value="UniProtKB-UniRule"/>
</dbReference>
<dbReference type="GO" id="GO:0052619">
    <property type="term" value="F:coenzyme F420-1:gamma-L-glutamate ligase activity"/>
    <property type="evidence" value="ECO:0007669"/>
    <property type="project" value="UniProtKB-UniRule"/>
</dbReference>
<dbReference type="GO" id="GO:0005525">
    <property type="term" value="F:GTP binding"/>
    <property type="evidence" value="ECO:0007669"/>
    <property type="project" value="UniProtKB-KW"/>
</dbReference>
<dbReference type="GO" id="GO:0046872">
    <property type="term" value="F:metal ion binding"/>
    <property type="evidence" value="ECO:0007669"/>
    <property type="project" value="UniProtKB-KW"/>
</dbReference>
<dbReference type="GO" id="GO:0052890">
    <property type="term" value="F:oxidoreductase activity, acting on the CH-CH group of donors, with a flavin as acceptor"/>
    <property type="evidence" value="ECO:0007669"/>
    <property type="project" value="UniProtKB-UniRule"/>
</dbReference>
<dbReference type="GO" id="GO:0052645">
    <property type="term" value="P:F420-0 metabolic process"/>
    <property type="evidence" value="ECO:0007669"/>
    <property type="project" value="UniProtKB-UniRule"/>
</dbReference>
<dbReference type="CDD" id="cd20607">
    <property type="entry name" value="FbiB_C-like"/>
    <property type="match status" value="1"/>
</dbReference>
<dbReference type="FunFam" id="3.40.109.10:FF:000009">
    <property type="entry name" value="Coenzyme F420:L-glutamate ligase"/>
    <property type="match status" value="1"/>
</dbReference>
<dbReference type="Gene3D" id="3.30.1330.100">
    <property type="entry name" value="CofE-like"/>
    <property type="match status" value="1"/>
</dbReference>
<dbReference type="Gene3D" id="3.90.1660.10">
    <property type="entry name" value="CofE-like domain"/>
    <property type="match status" value="1"/>
</dbReference>
<dbReference type="Gene3D" id="3.40.109.10">
    <property type="entry name" value="NADH Oxidase"/>
    <property type="match status" value="1"/>
</dbReference>
<dbReference type="HAMAP" id="MF_01259">
    <property type="entry name" value="F420_ligase_FbiB"/>
    <property type="match status" value="1"/>
</dbReference>
<dbReference type="InterPro" id="IPR008225">
    <property type="entry name" value="F420-0_g-glutamyl_ligase"/>
</dbReference>
<dbReference type="InterPro" id="IPR002847">
    <property type="entry name" value="F420-0_gamma-glut_ligase-dom"/>
</dbReference>
<dbReference type="InterPro" id="IPR019943">
    <property type="entry name" value="F420_FbiB_C"/>
</dbReference>
<dbReference type="InterPro" id="IPR023661">
    <property type="entry name" value="FbiB"/>
</dbReference>
<dbReference type="InterPro" id="IPR029479">
    <property type="entry name" value="Nitroreductase"/>
</dbReference>
<dbReference type="InterPro" id="IPR000415">
    <property type="entry name" value="Nitroreductase-like"/>
</dbReference>
<dbReference type="NCBIfam" id="TIGR01916">
    <property type="entry name" value="F420_cofE"/>
    <property type="match status" value="1"/>
</dbReference>
<dbReference type="NCBIfam" id="TIGR03553">
    <property type="entry name" value="F420_FbiB_CTERM"/>
    <property type="match status" value="1"/>
</dbReference>
<dbReference type="NCBIfam" id="NF009810">
    <property type="entry name" value="PRK13294.1"/>
    <property type="match status" value="1"/>
</dbReference>
<dbReference type="PANTHER" id="PTHR47917">
    <property type="match status" value="1"/>
</dbReference>
<dbReference type="PANTHER" id="PTHR47917:SF1">
    <property type="entry name" value="COENZYME F420:L-GLUTAMATE LIGASE"/>
    <property type="match status" value="1"/>
</dbReference>
<dbReference type="Pfam" id="PF01996">
    <property type="entry name" value="F420_ligase"/>
    <property type="match status" value="1"/>
</dbReference>
<dbReference type="Pfam" id="PF00881">
    <property type="entry name" value="Nitroreductase"/>
    <property type="match status" value="1"/>
</dbReference>
<dbReference type="SUPFAM" id="SSF144010">
    <property type="entry name" value="CofE-like"/>
    <property type="match status" value="1"/>
</dbReference>
<dbReference type="SUPFAM" id="SSF55469">
    <property type="entry name" value="FMN-dependent nitroreductase-like"/>
    <property type="match status" value="1"/>
</dbReference>
<sequence length="448" mass="47578">MTGPEHGSASTIEILPVIGLPEFRPGDDLSAAVAAAAPWLRDGDVVVVTSKVVSKCEGRLVPAPEDPEQRDRLRRKLIEDEAVRVLARKDRTLITENRLGLVQAAAGVDGSNVGRSELALLPVDPDASAATLRAGLRERLGVTVAVVITDTMGRAWRNGQTDAAVGAAGLAVLRNYAGVRDPYGNELVVTEVAVADEIAAAADLVKGKLTATPVAVVRGFGVSDDGSTARQLLRPGANDLFWLGTAEALELGRQQAQLLRRSVRRFSTDPVPGDLVEAAVAEALTAPAPHHTRPTRFVWLQTPAIRARLLDRMKDKWRSDLTSDGLPADAIERRVARGQILYDAPEVVIPMLVPDGAHSYPDAARTDAEHTMFTVAVGAAVQALLVALAVRGLGSCWIGSTIFAADLVRDELDLPVDWEPLGAIAIGYADEPSGLRDPVPAADLLILK</sequence>
<proteinExistence type="inferred from homology"/>
<evidence type="ECO:0000255" key="1">
    <source>
        <dbReference type="HAMAP-Rule" id="MF_01259"/>
    </source>
</evidence>
<evidence type="ECO:0000269" key="2">
    <source>
    </source>
</evidence>
<evidence type="ECO:0000305" key="3"/>
<gene>
    <name evidence="1" type="primary">fbiB</name>
    <name type="ordered locus">BQ2027_MB3290</name>
</gene>
<comment type="function">
    <text evidence="1">Bifunctional enzyme that catalyzes the GTP-dependent successive addition of multiple gamma-linked L-glutamates to the L-lactyl phosphodiester of 7,8-didemethyl-8-hydroxy-5-deazariboflavin (F420-0) to form polyglutamated F420 derivatives, and the FMNH2-dependent reduction of dehydro-F420-0 to form F420-0.</text>
</comment>
<comment type="catalytic activity">
    <reaction evidence="1">
        <text>oxidized coenzyme F420-0 + GTP + L-glutamate = oxidized coenzyme F420-1 + GDP + phosphate + H(+)</text>
        <dbReference type="Rhea" id="RHEA:30555"/>
        <dbReference type="ChEBI" id="CHEBI:15378"/>
        <dbReference type="ChEBI" id="CHEBI:29985"/>
        <dbReference type="ChEBI" id="CHEBI:37565"/>
        <dbReference type="ChEBI" id="CHEBI:43474"/>
        <dbReference type="ChEBI" id="CHEBI:58189"/>
        <dbReference type="ChEBI" id="CHEBI:59907"/>
        <dbReference type="ChEBI" id="CHEBI:59920"/>
        <dbReference type="EC" id="6.3.2.31"/>
    </reaction>
</comment>
<comment type="catalytic activity">
    <reaction evidence="1">
        <text>oxidized coenzyme F420-1 + GTP + L-glutamate = oxidized coenzyme F420-2 + GDP + phosphate + H(+)</text>
        <dbReference type="Rhea" id="RHEA:30523"/>
        <dbReference type="ChEBI" id="CHEBI:15378"/>
        <dbReference type="ChEBI" id="CHEBI:29985"/>
        <dbReference type="ChEBI" id="CHEBI:37565"/>
        <dbReference type="ChEBI" id="CHEBI:43474"/>
        <dbReference type="ChEBI" id="CHEBI:57922"/>
        <dbReference type="ChEBI" id="CHEBI:58189"/>
        <dbReference type="ChEBI" id="CHEBI:59920"/>
        <dbReference type="EC" id="6.3.2.34"/>
    </reaction>
</comment>
<comment type="catalytic activity">
    <reaction evidence="1">
        <text>oxidized coenzyme F420-(gamma-L-Glu)(n) + GTP + L-glutamate = oxidized coenzyme F420-(gamma-L-Glu)(n+1) + GDP + phosphate + H(+)</text>
        <dbReference type="Rhea" id="RHEA:51236"/>
        <dbReference type="Rhea" id="RHEA-COMP:12939"/>
        <dbReference type="Rhea" id="RHEA-COMP:12940"/>
        <dbReference type="ChEBI" id="CHEBI:15378"/>
        <dbReference type="ChEBI" id="CHEBI:29985"/>
        <dbReference type="ChEBI" id="CHEBI:37565"/>
        <dbReference type="ChEBI" id="CHEBI:43474"/>
        <dbReference type="ChEBI" id="CHEBI:58189"/>
        <dbReference type="ChEBI" id="CHEBI:133980"/>
    </reaction>
</comment>
<comment type="catalytic activity">
    <reaction evidence="1">
        <text>oxidized coenzyme F420-0 + FMN + H(+) = dehydro coenzyme F420-0 + FMNH2</text>
        <dbReference type="Rhea" id="RHEA:60360"/>
        <dbReference type="ChEBI" id="CHEBI:15378"/>
        <dbReference type="ChEBI" id="CHEBI:57618"/>
        <dbReference type="ChEBI" id="CHEBI:58210"/>
        <dbReference type="ChEBI" id="CHEBI:59907"/>
        <dbReference type="ChEBI" id="CHEBI:143705"/>
        <dbReference type="EC" id="1.3.8.17"/>
    </reaction>
</comment>
<comment type="cofactor">
    <cofactor evidence="1">
        <name>Mg(2+)</name>
        <dbReference type="ChEBI" id="CHEBI:18420"/>
    </cofactor>
    <cofactor evidence="1">
        <name>Mn(2+)</name>
        <dbReference type="ChEBI" id="CHEBI:29035"/>
    </cofactor>
    <text evidence="1">Binds 2 divalent metal cations per subunit. The ions could be magnesium and/or manganese.</text>
</comment>
<comment type="cofactor">
    <cofactor evidence="1">
        <name>K(+)</name>
        <dbReference type="ChEBI" id="CHEBI:29103"/>
    </cofactor>
    <text evidence="1">Monovalent cation. The ion could be potassium.</text>
</comment>
<comment type="pathway">
    <text evidence="1 2">Cofactor biosynthesis; coenzyme F420 biosynthesis.</text>
</comment>
<comment type="disruption phenotype">
    <text evidence="2">Cells lacking this gene cannot make F420-5,6 as the wild-type, but are able to make the biosynthesis of the intermediate FO.</text>
</comment>
<comment type="similarity">
    <text evidence="1 3">In the N-terminal section; belongs to the CofE family.</text>
</comment>